<comment type="function">
    <text evidence="1">Acts as a processive, ATP-dependent zinc metallopeptidase for both cytoplasmic and membrane proteins. Plays a role in the quality control of integral membrane proteins (By similarity).</text>
</comment>
<comment type="cofactor">
    <cofactor evidence="1">
        <name>Zn(2+)</name>
        <dbReference type="ChEBI" id="CHEBI:29105"/>
    </cofactor>
    <text evidence="1">Binds 1 zinc ion per subunit.</text>
</comment>
<comment type="subunit">
    <text evidence="4">Homohexamer.</text>
</comment>
<comment type="subcellular location">
    <subcellularLocation>
        <location evidence="1">Cell inner membrane</location>
        <topology evidence="1">Multi-pass membrane protein</topology>
        <orientation evidence="1">Cytoplasmic side</orientation>
    </subcellularLocation>
</comment>
<comment type="similarity">
    <text evidence="4">In the central section; belongs to the AAA ATPase family.</text>
</comment>
<comment type="similarity">
    <text evidence="4">In the C-terminal section; belongs to the peptidase M41 family.</text>
</comment>
<sequence length="913" mass="101815">MAKDKKTNPESKKSFPTAFFFLLFGVIFGVVTVQNFFSAKKASVGFSHQLEHLVNLKLLIPEESRKTALNDNLVSFSGRFREVVPAEGQVRYQYLDLIERKHQIDFELEEASKSLTVLSKEVRNAITWFSAISGMPIPEAGYTISPRTDVGLSVLEPLVVYGPVDAQIVNLAALENRVRSLPKSTESLRVFGSDLYALIGKYLSPALGIGSESLKKEIKDLHQQVENSLTQVIEGDQAVALYKTVLETLHRISLALVSPEEGTRFHQLRSVRLYREDFNRCVKLLRESDETQVQLDKLRGELVQAVWYFNNQELSSRALEKQDPEVFSRWFEGAKQEWAAFSSNKSLSFRAPDQPRNLVLEKTFRSEEPTPHYSGYLFTFMPIILVLLFIYFIFSRQVKGMNGSAMSFGKSPARLLAKGQNKVTFADVAGIEEAKEELVEIVDFLKNPTKFTSLGGRIPKGILLIGAPGTGKTLIAKAVAGEADRPFFSIAGSDFVEMFVGVGASRIRDMFEQAKRNAPCIIFIDEIDAVGRHRGAGIGGGHDEREQTLNQLLVEMDGFGTNEGVILMAATNRPDVLDKALLRPGRFDRRVVVNLPDIKGRFEILAVHAKRIKLDPTVDLMAVARSTPGASGADLENLLNEAALLAARKDRTAVTAVEVAEARDKVLYGKERRSLEMDAQEKKTTAYHESGHAIVGLCVEHSDPVDKVTIIPRGLSLGATHFLPEKNKLSYWKKELYDQLAVLMGGRAAEQIFLGDVSSGAQQDIAQATKIVRSMICEWGMSDHLGTVAYDEHSEAAPTGYGSYHEKNYSEETAKVIDNELKTLLDAAYQRALDIINSHKEELELMTQMLIEFETLDSKDVKEIMDHSWDADKKRARMKEEGMLYKKISEDLPPPPPQENVQDGTSLKFNTST</sequence>
<accession>B0B970</accession>
<evidence type="ECO:0000250" key="1"/>
<evidence type="ECO:0000255" key="2"/>
<evidence type="ECO:0000256" key="3">
    <source>
        <dbReference type="SAM" id="MobiDB-lite"/>
    </source>
</evidence>
<evidence type="ECO:0000305" key="4"/>
<keyword id="KW-0067">ATP-binding</keyword>
<keyword id="KW-0997">Cell inner membrane</keyword>
<keyword id="KW-1003">Cell membrane</keyword>
<keyword id="KW-0378">Hydrolase</keyword>
<keyword id="KW-0472">Membrane</keyword>
<keyword id="KW-0479">Metal-binding</keyword>
<keyword id="KW-0482">Metalloprotease</keyword>
<keyword id="KW-0547">Nucleotide-binding</keyword>
<keyword id="KW-0645">Protease</keyword>
<keyword id="KW-0812">Transmembrane</keyword>
<keyword id="KW-1133">Transmembrane helix</keyword>
<keyword id="KW-0862">Zinc</keyword>
<protein>
    <recommendedName>
        <fullName>ATP-dependent zinc metalloprotease FtsH</fullName>
        <ecNumber>3.4.24.-</ecNumber>
    </recommendedName>
</protein>
<feature type="chain" id="PRO_5000301031" description="ATP-dependent zinc metalloprotease FtsH">
    <location>
        <begin position="1"/>
        <end position="913"/>
    </location>
</feature>
<feature type="topological domain" description="Cytoplasmic" evidence="2">
    <location>
        <begin position="1"/>
        <end position="16"/>
    </location>
</feature>
<feature type="transmembrane region" description="Helical" evidence="2">
    <location>
        <begin position="17"/>
        <end position="37"/>
    </location>
</feature>
<feature type="topological domain" description="Periplasmic" evidence="2">
    <location>
        <begin position="38"/>
        <end position="373"/>
    </location>
</feature>
<feature type="transmembrane region" description="Helical" evidence="2">
    <location>
        <begin position="374"/>
        <end position="394"/>
    </location>
</feature>
<feature type="topological domain" description="Cytoplasmic" evidence="2">
    <location>
        <begin position="395"/>
        <end position="913"/>
    </location>
</feature>
<feature type="region of interest" description="Unknown">
    <location>
        <begin position="1"/>
        <end position="100"/>
    </location>
</feature>
<feature type="region of interest" description="ATP-dependent zinc metalloprotease FtsH">
    <location>
        <begin position="101"/>
        <end position="913"/>
    </location>
</feature>
<feature type="region of interest" description="Disordered" evidence="3">
    <location>
        <begin position="887"/>
        <end position="913"/>
    </location>
</feature>
<feature type="compositionally biased region" description="Polar residues" evidence="3">
    <location>
        <begin position="899"/>
        <end position="913"/>
    </location>
</feature>
<feature type="active site" evidence="1">
    <location>
        <position position="689"/>
    </location>
</feature>
<feature type="binding site" evidence="2">
    <location>
        <begin position="466"/>
        <end position="473"/>
    </location>
    <ligand>
        <name>ATP</name>
        <dbReference type="ChEBI" id="CHEBI:30616"/>
    </ligand>
</feature>
<feature type="binding site" evidence="1">
    <location>
        <position position="688"/>
    </location>
    <ligand>
        <name>Zn(2+)</name>
        <dbReference type="ChEBI" id="CHEBI:29105"/>
        <note>catalytic</note>
    </ligand>
</feature>
<feature type="binding site" evidence="1">
    <location>
        <position position="692"/>
    </location>
    <ligand>
        <name>Zn(2+)</name>
        <dbReference type="ChEBI" id="CHEBI:29105"/>
        <note>catalytic</note>
    </ligand>
</feature>
<feature type="binding site" evidence="1">
    <location>
        <position position="764"/>
    </location>
    <ligand>
        <name>Zn(2+)</name>
        <dbReference type="ChEBI" id="CHEBI:29105"/>
        <note>catalytic</note>
    </ligand>
</feature>
<name>FTSH_CHLT2</name>
<proteinExistence type="inferred from homology"/>
<reference key="1">
    <citation type="journal article" date="2008" name="Genome Res.">
        <title>Chlamydia trachomatis: genome sequence analysis of lymphogranuloma venereum isolates.</title>
        <authorList>
            <person name="Thomson N.R."/>
            <person name="Holden M.T.G."/>
            <person name="Carder C."/>
            <person name="Lennard N."/>
            <person name="Lockey S.J."/>
            <person name="Marsh P."/>
            <person name="Skipp P."/>
            <person name="O'Connor C.D."/>
            <person name="Goodhead I."/>
            <person name="Norbertzcak H."/>
            <person name="Harris B."/>
            <person name="Ormond D."/>
            <person name="Rance R."/>
            <person name="Quail M.A."/>
            <person name="Parkhill J."/>
            <person name="Stephens R.S."/>
            <person name="Clarke I.N."/>
        </authorList>
    </citation>
    <scope>NUCLEOTIDE SEQUENCE [LARGE SCALE GENOMIC DNA]</scope>
    <source>
        <strain>ATCC VR-902B / DSM 19102 / 434/Bu</strain>
    </source>
</reference>
<gene>
    <name type="primary">ftsH</name>
    <name type="ordered locus">CTL0213</name>
</gene>
<dbReference type="EC" id="3.4.24.-"/>
<dbReference type="EMBL" id="AM884176">
    <property type="protein sequence ID" value="CAP03657.1"/>
    <property type="molecule type" value="Genomic_DNA"/>
</dbReference>
<dbReference type="RefSeq" id="WP_009873450.1">
    <property type="nucleotide sequence ID" value="NC_010287.1"/>
</dbReference>
<dbReference type="RefSeq" id="YP_001654303.1">
    <property type="nucleotide sequence ID" value="NC_010287.1"/>
</dbReference>
<dbReference type="SMR" id="B0B970"/>
<dbReference type="KEGG" id="ctb:CTL0213"/>
<dbReference type="PATRIC" id="fig|471472.4.peg.230"/>
<dbReference type="HOGENOM" id="CLU_000688_7_1_0"/>
<dbReference type="Proteomes" id="UP001154402">
    <property type="component" value="Chromosome"/>
</dbReference>
<dbReference type="GO" id="GO:0005886">
    <property type="term" value="C:plasma membrane"/>
    <property type="evidence" value="ECO:0007669"/>
    <property type="project" value="UniProtKB-SubCell"/>
</dbReference>
<dbReference type="GO" id="GO:0005524">
    <property type="term" value="F:ATP binding"/>
    <property type="evidence" value="ECO:0007669"/>
    <property type="project" value="UniProtKB-UniRule"/>
</dbReference>
<dbReference type="GO" id="GO:0016887">
    <property type="term" value="F:ATP hydrolysis activity"/>
    <property type="evidence" value="ECO:0007669"/>
    <property type="project" value="UniProtKB-UniRule"/>
</dbReference>
<dbReference type="GO" id="GO:0004176">
    <property type="term" value="F:ATP-dependent peptidase activity"/>
    <property type="evidence" value="ECO:0007669"/>
    <property type="project" value="InterPro"/>
</dbReference>
<dbReference type="GO" id="GO:0004222">
    <property type="term" value="F:metalloendopeptidase activity"/>
    <property type="evidence" value="ECO:0007669"/>
    <property type="project" value="InterPro"/>
</dbReference>
<dbReference type="GO" id="GO:0008270">
    <property type="term" value="F:zinc ion binding"/>
    <property type="evidence" value="ECO:0007669"/>
    <property type="project" value="UniProtKB-UniRule"/>
</dbReference>
<dbReference type="GO" id="GO:0030163">
    <property type="term" value="P:protein catabolic process"/>
    <property type="evidence" value="ECO:0007669"/>
    <property type="project" value="UniProtKB-UniRule"/>
</dbReference>
<dbReference type="GO" id="GO:0006508">
    <property type="term" value="P:proteolysis"/>
    <property type="evidence" value="ECO:0007669"/>
    <property type="project" value="UniProtKB-KW"/>
</dbReference>
<dbReference type="CDD" id="cd19501">
    <property type="entry name" value="RecA-like_FtsH"/>
    <property type="match status" value="1"/>
</dbReference>
<dbReference type="FunFam" id="1.10.8.60:FF:000001">
    <property type="entry name" value="ATP-dependent zinc metalloprotease FtsH"/>
    <property type="match status" value="1"/>
</dbReference>
<dbReference type="FunFam" id="1.20.58.760:FF:000001">
    <property type="entry name" value="ATP-dependent zinc metalloprotease FtsH"/>
    <property type="match status" value="1"/>
</dbReference>
<dbReference type="FunFam" id="3.40.50.300:FF:000001">
    <property type="entry name" value="ATP-dependent zinc metalloprotease FtsH"/>
    <property type="match status" value="1"/>
</dbReference>
<dbReference type="Gene3D" id="1.10.8.60">
    <property type="match status" value="1"/>
</dbReference>
<dbReference type="Gene3D" id="3.40.50.300">
    <property type="entry name" value="P-loop containing nucleotide triphosphate hydrolases"/>
    <property type="match status" value="1"/>
</dbReference>
<dbReference type="Gene3D" id="1.20.58.760">
    <property type="entry name" value="Peptidase M41"/>
    <property type="match status" value="1"/>
</dbReference>
<dbReference type="HAMAP" id="MF_01458">
    <property type="entry name" value="FtsH"/>
    <property type="match status" value="1"/>
</dbReference>
<dbReference type="InterPro" id="IPR003593">
    <property type="entry name" value="AAA+_ATPase"/>
</dbReference>
<dbReference type="InterPro" id="IPR041569">
    <property type="entry name" value="AAA_lid_3"/>
</dbReference>
<dbReference type="InterPro" id="IPR003959">
    <property type="entry name" value="ATPase_AAA_core"/>
</dbReference>
<dbReference type="InterPro" id="IPR003960">
    <property type="entry name" value="ATPase_AAA_CS"/>
</dbReference>
<dbReference type="InterPro" id="IPR005936">
    <property type="entry name" value="FtsH"/>
</dbReference>
<dbReference type="InterPro" id="IPR027417">
    <property type="entry name" value="P-loop_NTPase"/>
</dbReference>
<dbReference type="InterPro" id="IPR000642">
    <property type="entry name" value="Peptidase_M41"/>
</dbReference>
<dbReference type="InterPro" id="IPR037219">
    <property type="entry name" value="Peptidase_M41-like"/>
</dbReference>
<dbReference type="NCBIfam" id="TIGR01241">
    <property type="entry name" value="FtsH_fam"/>
    <property type="match status" value="1"/>
</dbReference>
<dbReference type="PANTHER" id="PTHR23076:SF97">
    <property type="entry name" value="ATP-DEPENDENT ZINC METALLOPROTEASE YME1L1"/>
    <property type="match status" value="1"/>
</dbReference>
<dbReference type="PANTHER" id="PTHR23076">
    <property type="entry name" value="METALLOPROTEASE M41 FTSH"/>
    <property type="match status" value="1"/>
</dbReference>
<dbReference type="Pfam" id="PF00004">
    <property type="entry name" value="AAA"/>
    <property type="match status" value="1"/>
</dbReference>
<dbReference type="Pfam" id="PF17862">
    <property type="entry name" value="AAA_lid_3"/>
    <property type="match status" value="1"/>
</dbReference>
<dbReference type="Pfam" id="PF01434">
    <property type="entry name" value="Peptidase_M41"/>
    <property type="match status" value="1"/>
</dbReference>
<dbReference type="SMART" id="SM00382">
    <property type="entry name" value="AAA"/>
    <property type="match status" value="1"/>
</dbReference>
<dbReference type="SUPFAM" id="SSF140990">
    <property type="entry name" value="FtsH protease domain-like"/>
    <property type="match status" value="1"/>
</dbReference>
<dbReference type="SUPFAM" id="SSF52540">
    <property type="entry name" value="P-loop containing nucleoside triphosphate hydrolases"/>
    <property type="match status" value="1"/>
</dbReference>
<dbReference type="PROSITE" id="PS00674">
    <property type="entry name" value="AAA"/>
    <property type="match status" value="1"/>
</dbReference>
<organism>
    <name type="scientific">Chlamydia trachomatis serovar L2 (strain ATCC VR-902B / DSM 19102 / 434/Bu)</name>
    <dbReference type="NCBI Taxonomy" id="471472"/>
    <lineage>
        <taxon>Bacteria</taxon>
        <taxon>Pseudomonadati</taxon>
        <taxon>Chlamydiota</taxon>
        <taxon>Chlamydiia</taxon>
        <taxon>Chlamydiales</taxon>
        <taxon>Chlamydiaceae</taxon>
        <taxon>Chlamydia/Chlamydophila group</taxon>
        <taxon>Chlamydia</taxon>
    </lineage>
</organism>